<sequence length="217" mass="24993">MPTNCAAAGCAATYNKHINISFHRFPLDPKRRKEWVRLVRRKNFVPGKHTFLCSKHFEASCFDLTGQTRRLKMDAVPTIFDFCTHIKSLKLKSRNLLKTNNSFPPTGPCNLKLNGSQQVLLEHSYAFRNPMEAKKRIIKLEKEIASLRKKMKTCLQRERRATRRWIKATCFVKSLEASNMLPKGISEQILPTALSNLPLEDLKSLEQDQQDKTVPIL</sequence>
<accession>Q9D305</accession>
<keyword id="KW-0238">DNA-binding</keyword>
<keyword id="KW-0479">Metal-binding</keyword>
<keyword id="KW-1185">Reference proteome</keyword>
<keyword id="KW-0862">Zinc</keyword>
<keyword id="KW-0863">Zinc-finger</keyword>
<gene>
    <name type="primary">Thap2</name>
</gene>
<proteinExistence type="evidence at transcript level"/>
<dbReference type="EMBL" id="AK018577">
    <property type="protein sequence ID" value="BAB31288.1"/>
    <property type="molecule type" value="mRNA"/>
</dbReference>
<dbReference type="EMBL" id="AK081303">
    <property type="protein sequence ID" value="BAC38189.1"/>
    <property type="molecule type" value="mRNA"/>
</dbReference>
<dbReference type="EMBL" id="BC027502">
    <property type="protein sequence ID" value="AAH27502.1"/>
    <property type="molecule type" value="mRNA"/>
</dbReference>
<dbReference type="CCDS" id="CCDS24179.1"/>
<dbReference type="RefSeq" id="NP_080056.1">
    <property type="nucleotide sequence ID" value="NM_025780.4"/>
</dbReference>
<dbReference type="SMR" id="Q9D305"/>
<dbReference type="FunCoup" id="Q9D305">
    <property type="interactions" value="1969"/>
</dbReference>
<dbReference type="STRING" id="10090.ENSMUSP00000151353"/>
<dbReference type="iPTMnet" id="Q9D305"/>
<dbReference type="PhosphoSitePlus" id="Q9D305"/>
<dbReference type="PaxDb" id="10090-ENSMUSP00000020346"/>
<dbReference type="ProteomicsDB" id="263122"/>
<dbReference type="DNASU" id="66816"/>
<dbReference type="Ensembl" id="ENSMUST00000218842.2">
    <property type="protein sequence ID" value="ENSMUSP00000151353.2"/>
    <property type="gene ID" value="ENSMUSG00000020137.6"/>
</dbReference>
<dbReference type="GeneID" id="66816"/>
<dbReference type="KEGG" id="mmu:66816"/>
<dbReference type="UCSC" id="uc007hbe.1">
    <property type="organism name" value="mouse"/>
</dbReference>
<dbReference type="AGR" id="MGI:1914066"/>
<dbReference type="CTD" id="83591"/>
<dbReference type="MGI" id="MGI:1914066">
    <property type="gene designation" value="Thap2"/>
</dbReference>
<dbReference type="VEuPathDB" id="HostDB:ENSMUSG00000020137"/>
<dbReference type="eggNOG" id="ENOG502RYEP">
    <property type="taxonomic scope" value="Eukaryota"/>
</dbReference>
<dbReference type="GeneTree" id="ENSGT00940000161088"/>
<dbReference type="HOGENOM" id="CLU_076186_2_2_1"/>
<dbReference type="InParanoid" id="Q9D305"/>
<dbReference type="OMA" id="RGTSEHI"/>
<dbReference type="OrthoDB" id="7312725at2759"/>
<dbReference type="PhylomeDB" id="Q9D305"/>
<dbReference type="TreeFam" id="TF330127"/>
<dbReference type="BioGRID-ORCS" id="66816">
    <property type="hits" value="5 hits in 76 CRISPR screens"/>
</dbReference>
<dbReference type="ChiTaRS" id="Thap2">
    <property type="organism name" value="mouse"/>
</dbReference>
<dbReference type="PRO" id="PR:Q9D305"/>
<dbReference type="Proteomes" id="UP000000589">
    <property type="component" value="Chromosome 10"/>
</dbReference>
<dbReference type="RNAct" id="Q9D305">
    <property type="molecule type" value="protein"/>
</dbReference>
<dbReference type="Bgee" id="ENSMUSG00000020137">
    <property type="expression patterns" value="Expressed in lacrimal gland and 220 other cell types or tissues"/>
</dbReference>
<dbReference type="ExpressionAtlas" id="Q9D305">
    <property type="expression patterns" value="baseline and differential"/>
</dbReference>
<dbReference type="GO" id="GO:0005730">
    <property type="term" value="C:nucleolus"/>
    <property type="evidence" value="ECO:0007669"/>
    <property type="project" value="Ensembl"/>
</dbReference>
<dbReference type="GO" id="GO:0003677">
    <property type="term" value="F:DNA binding"/>
    <property type="evidence" value="ECO:0007669"/>
    <property type="project" value="UniProtKB-KW"/>
</dbReference>
<dbReference type="GO" id="GO:0008270">
    <property type="term" value="F:zinc ion binding"/>
    <property type="evidence" value="ECO:0007669"/>
    <property type="project" value="UniProtKB-KW"/>
</dbReference>
<dbReference type="Gene3D" id="6.20.210.20">
    <property type="entry name" value="THAP domain"/>
    <property type="match status" value="1"/>
</dbReference>
<dbReference type="InterPro" id="IPR026521">
    <property type="entry name" value="THAP2"/>
</dbReference>
<dbReference type="InterPro" id="IPR006612">
    <property type="entry name" value="THAP_Znf"/>
</dbReference>
<dbReference type="InterPro" id="IPR038441">
    <property type="entry name" value="THAP_Znf_sf"/>
</dbReference>
<dbReference type="PANTHER" id="PTHR47696">
    <property type="entry name" value="THAP DOMAIN-CONTAINING PROTEIN 2"/>
    <property type="match status" value="1"/>
</dbReference>
<dbReference type="PANTHER" id="PTHR47696:SF1">
    <property type="entry name" value="THAP DOMAIN-CONTAINING PROTEIN 2"/>
    <property type="match status" value="1"/>
</dbReference>
<dbReference type="Pfam" id="PF05485">
    <property type="entry name" value="THAP"/>
    <property type="match status" value="1"/>
</dbReference>
<dbReference type="SMART" id="SM00692">
    <property type="entry name" value="DM3"/>
    <property type="match status" value="1"/>
</dbReference>
<dbReference type="SMART" id="SM00980">
    <property type="entry name" value="THAP"/>
    <property type="match status" value="1"/>
</dbReference>
<dbReference type="SUPFAM" id="SSF57716">
    <property type="entry name" value="Glucocorticoid receptor-like (DNA-binding domain)"/>
    <property type="match status" value="1"/>
</dbReference>
<dbReference type="PROSITE" id="PS50950">
    <property type="entry name" value="ZF_THAP"/>
    <property type="match status" value="1"/>
</dbReference>
<organism>
    <name type="scientific">Mus musculus</name>
    <name type="common">Mouse</name>
    <dbReference type="NCBI Taxonomy" id="10090"/>
    <lineage>
        <taxon>Eukaryota</taxon>
        <taxon>Metazoa</taxon>
        <taxon>Chordata</taxon>
        <taxon>Craniata</taxon>
        <taxon>Vertebrata</taxon>
        <taxon>Euteleostomi</taxon>
        <taxon>Mammalia</taxon>
        <taxon>Eutheria</taxon>
        <taxon>Euarchontoglires</taxon>
        <taxon>Glires</taxon>
        <taxon>Rodentia</taxon>
        <taxon>Myomorpha</taxon>
        <taxon>Muroidea</taxon>
        <taxon>Muridae</taxon>
        <taxon>Murinae</taxon>
        <taxon>Mus</taxon>
        <taxon>Mus</taxon>
    </lineage>
</organism>
<feature type="chain" id="PRO_0000068643" description="THAP domain-containing protein 2">
    <location>
        <begin position="1"/>
        <end position="217"/>
    </location>
</feature>
<feature type="zinc finger region" description="THAP-type" evidence="2">
    <location>
        <begin position="1"/>
        <end position="80"/>
    </location>
</feature>
<feature type="short sequence motif" description="HCFC1-binding motif (HBM)" evidence="1">
    <location>
        <begin position="122"/>
        <end position="125"/>
    </location>
</feature>
<protein>
    <recommendedName>
        <fullName>THAP domain-containing protein 2</fullName>
    </recommendedName>
</protein>
<evidence type="ECO:0000250" key="1"/>
<evidence type="ECO:0000255" key="2">
    <source>
        <dbReference type="PROSITE-ProRule" id="PRU00309"/>
    </source>
</evidence>
<reference key="1">
    <citation type="journal article" date="2005" name="Science">
        <title>The transcriptional landscape of the mammalian genome.</title>
        <authorList>
            <person name="Carninci P."/>
            <person name="Kasukawa T."/>
            <person name="Katayama S."/>
            <person name="Gough J."/>
            <person name="Frith M.C."/>
            <person name="Maeda N."/>
            <person name="Oyama R."/>
            <person name="Ravasi T."/>
            <person name="Lenhard B."/>
            <person name="Wells C."/>
            <person name="Kodzius R."/>
            <person name="Shimokawa K."/>
            <person name="Bajic V.B."/>
            <person name="Brenner S.E."/>
            <person name="Batalov S."/>
            <person name="Forrest A.R."/>
            <person name="Zavolan M."/>
            <person name="Davis M.J."/>
            <person name="Wilming L.G."/>
            <person name="Aidinis V."/>
            <person name="Allen J.E."/>
            <person name="Ambesi-Impiombato A."/>
            <person name="Apweiler R."/>
            <person name="Aturaliya R.N."/>
            <person name="Bailey T.L."/>
            <person name="Bansal M."/>
            <person name="Baxter L."/>
            <person name="Beisel K.W."/>
            <person name="Bersano T."/>
            <person name="Bono H."/>
            <person name="Chalk A.M."/>
            <person name="Chiu K.P."/>
            <person name="Choudhary V."/>
            <person name="Christoffels A."/>
            <person name="Clutterbuck D.R."/>
            <person name="Crowe M.L."/>
            <person name="Dalla E."/>
            <person name="Dalrymple B.P."/>
            <person name="de Bono B."/>
            <person name="Della Gatta G."/>
            <person name="di Bernardo D."/>
            <person name="Down T."/>
            <person name="Engstrom P."/>
            <person name="Fagiolini M."/>
            <person name="Faulkner G."/>
            <person name="Fletcher C.F."/>
            <person name="Fukushima T."/>
            <person name="Furuno M."/>
            <person name="Futaki S."/>
            <person name="Gariboldi M."/>
            <person name="Georgii-Hemming P."/>
            <person name="Gingeras T.R."/>
            <person name="Gojobori T."/>
            <person name="Green R.E."/>
            <person name="Gustincich S."/>
            <person name="Harbers M."/>
            <person name="Hayashi Y."/>
            <person name="Hensch T.K."/>
            <person name="Hirokawa N."/>
            <person name="Hill D."/>
            <person name="Huminiecki L."/>
            <person name="Iacono M."/>
            <person name="Ikeo K."/>
            <person name="Iwama A."/>
            <person name="Ishikawa T."/>
            <person name="Jakt M."/>
            <person name="Kanapin A."/>
            <person name="Katoh M."/>
            <person name="Kawasawa Y."/>
            <person name="Kelso J."/>
            <person name="Kitamura H."/>
            <person name="Kitano H."/>
            <person name="Kollias G."/>
            <person name="Krishnan S.P."/>
            <person name="Kruger A."/>
            <person name="Kummerfeld S.K."/>
            <person name="Kurochkin I.V."/>
            <person name="Lareau L.F."/>
            <person name="Lazarevic D."/>
            <person name="Lipovich L."/>
            <person name="Liu J."/>
            <person name="Liuni S."/>
            <person name="McWilliam S."/>
            <person name="Madan Babu M."/>
            <person name="Madera M."/>
            <person name="Marchionni L."/>
            <person name="Matsuda H."/>
            <person name="Matsuzawa S."/>
            <person name="Miki H."/>
            <person name="Mignone F."/>
            <person name="Miyake S."/>
            <person name="Morris K."/>
            <person name="Mottagui-Tabar S."/>
            <person name="Mulder N."/>
            <person name="Nakano N."/>
            <person name="Nakauchi H."/>
            <person name="Ng P."/>
            <person name="Nilsson R."/>
            <person name="Nishiguchi S."/>
            <person name="Nishikawa S."/>
            <person name="Nori F."/>
            <person name="Ohara O."/>
            <person name="Okazaki Y."/>
            <person name="Orlando V."/>
            <person name="Pang K.C."/>
            <person name="Pavan W.J."/>
            <person name="Pavesi G."/>
            <person name="Pesole G."/>
            <person name="Petrovsky N."/>
            <person name="Piazza S."/>
            <person name="Reed J."/>
            <person name="Reid J.F."/>
            <person name="Ring B.Z."/>
            <person name="Ringwald M."/>
            <person name="Rost B."/>
            <person name="Ruan Y."/>
            <person name="Salzberg S.L."/>
            <person name="Sandelin A."/>
            <person name="Schneider C."/>
            <person name="Schoenbach C."/>
            <person name="Sekiguchi K."/>
            <person name="Semple C.A."/>
            <person name="Seno S."/>
            <person name="Sessa L."/>
            <person name="Sheng Y."/>
            <person name="Shibata Y."/>
            <person name="Shimada H."/>
            <person name="Shimada K."/>
            <person name="Silva D."/>
            <person name="Sinclair B."/>
            <person name="Sperling S."/>
            <person name="Stupka E."/>
            <person name="Sugiura K."/>
            <person name="Sultana R."/>
            <person name="Takenaka Y."/>
            <person name="Taki K."/>
            <person name="Tammoja K."/>
            <person name="Tan S.L."/>
            <person name="Tang S."/>
            <person name="Taylor M.S."/>
            <person name="Tegner J."/>
            <person name="Teichmann S.A."/>
            <person name="Ueda H.R."/>
            <person name="van Nimwegen E."/>
            <person name="Verardo R."/>
            <person name="Wei C.L."/>
            <person name="Yagi K."/>
            <person name="Yamanishi H."/>
            <person name="Zabarovsky E."/>
            <person name="Zhu S."/>
            <person name="Zimmer A."/>
            <person name="Hide W."/>
            <person name="Bult C."/>
            <person name="Grimmond S.M."/>
            <person name="Teasdale R.D."/>
            <person name="Liu E.T."/>
            <person name="Brusic V."/>
            <person name="Quackenbush J."/>
            <person name="Wahlestedt C."/>
            <person name="Mattick J.S."/>
            <person name="Hume D.A."/>
            <person name="Kai C."/>
            <person name="Sasaki D."/>
            <person name="Tomaru Y."/>
            <person name="Fukuda S."/>
            <person name="Kanamori-Katayama M."/>
            <person name="Suzuki M."/>
            <person name="Aoki J."/>
            <person name="Arakawa T."/>
            <person name="Iida J."/>
            <person name="Imamura K."/>
            <person name="Itoh M."/>
            <person name="Kato T."/>
            <person name="Kawaji H."/>
            <person name="Kawagashira N."/>
            <person name="Kawashima T."/>
            <person name="Kojima M."/>
            <person name="Kondo S."/>
            <person name="Konno H."/>
            <person name="Nakano K."/>
            <person name="Ninomiya N."/>
            <person name="Nishio T."/>
            <person name="Okada M."/>
            <person name="Plessy C."/>
            <person name="Shibata K."/>
            <person name="Shiraki T."/>
            <person name="Suzuki S."/>
            <person name="Tagami M."/>
            <person name="Waki K."/>
            <person name="Watahiki A."/>
            <person name="Okamura-Oho Y."/>
            <person name="Suzuki H."/>
            <person name="Kawai J."/>
            <person name="Hayashizaki Y."/>
        </authorList>
    </citation>
    <scope>NUCLEOTIDE SEQUENCE [LARGE SCALE MRNA]</scope>
    <source>
        <strain>C57BL/6J</strain>
        <tissue>Colon</tissue>
        <tissue>Head</tissue>
    </source>
</reference>
<reference key="2">
    <citation type="journal article" date="2004" name="Genome Res.">
        <title>The status, quality, and expansion of the NIH full-length cDNA project: the Mammalian Gene Collection (MGC).</title>
        <authorList>
            <consortium name="The MGC Project Team"/>
        </authorList>
    </citation>
    <scope>NUCLEOTIDE SEQUENCE [LARGE SCALE MRNA]</scope>
    <source>
        <tissue>Mammary gland</tissue>
    </source>
</reference>
<name>THAP2_MOUSE</name>